<reference key="1">
    <citation type="submission" date="2007-09" db="EMBL/GenBank/DDBJ databases">
        <title>Complete genome sequence of Rickettsia akari.</title>
        <authorList>
            <person name="Madan A."/>
            <person name="Fahey J."/>
            <person name="Helton E."/>
            <person name="Ketteman M."/>
            <person name="Madan A."/>
            <person name="Rodrigues S."/>
            <person name="Sanchez A."/>
            <person name="Whiting M."/>
            <person name="Dasch G."/>
            <person name="Eremeeva M."/>
        </authorList>
    </citation>
    <scope>NUCLEOTIDE SEQUENCE [LARGE SCALE GENOMIC DNA]</scope>
    <source>
        <strain>Hartford</strain>
    </source>
</reference>
<gene>
    <name evidence="1" type="primary">ybeY</name>
    <name type="ordered locus">A1C_05790</name>
</gene>
<accession>A8GPR8</accession>
<protein>
    <recommendedName>
        <fullName evidence="1">Endoribonuclease YbeY</fullName>
        <ecNumber evidence="1">3.1.-.-</ecNumber>
    </recommendedName>
</protein>
<sequence length="167" mass="19833">MINVEIIKNYDKWREHKQINKSLIQKITQNILLRFNNFSKIKQFELSMLLTNTAEILTLNKQFRNIEKATNVLAFPSNELNWQDLYSKLEFLGDSDYMHLGDVAFCYEVIYNESCEQQKTFENHFIHLLIHSILHLIGFDHQNDTEAHIMENLEIEILSYFGISSPY</sequence>
<proteinExistence type="inferred from homology"/>
<name>YBEY_RICAH</name>
<feature type="chain" id="PRO_1000000736" description="Endoribonuclease YbeY">
    <location>
        <begin position="1"/>
        <end position="167"/>
    </location>
</feature>
<feature type="binding site" evidence="1">
    <location>
        <position position="131"/>
    </location>
    <ligand>
        <name>Zn(2+)</name>
        <dbReference type="ChEBI" id="CHEBI:29105"/>
        <note>catalytic</note>
    </ligand>
</feature>
<feature type="binding site" evidence="1">
    <location>
        <position position="135"/>
    </location>
    <ligand>
        <name>Zn(2+)</name>
        <dbReference type="ChEBI" id="CHEBI:29105"/>
        <note>catalytic</note>
    </ligand>
</feature>
<feature type="binding site" evidence="1">
    <location>
        <position position="141"/>
    </location>
    <ligand>
        <name>Zn(2+)</name>
        <dbReference type="ChEBI" id="CHEBI:29105"/>
        <note>catalytic</note>
    </ligand>
</feature>
<comment type="function">
    <text evidence="1">Single strand-specific metallo-endoribonuclease involved in late-stage 70S ribosome quality control and in maturation of the 3' terminus of the 16S rRNA.</text>
</comment>
<comment type="cofactor">
    <cofactor evidence="1">
        <name>Zn(2+)</name>
        <dbReference type="ChEBI" id="CHEBI:29105"/>
    </cofactor>
    <text evidence="1">Binds 1 zinc ion.</text>
</comment>
<comment type="subcellular location">
    <subcellularLocation>
        <location evidence="1">Cytoplasm</location>
    </subcellularLocation>
</comment>
<comment type="similarity">
    <text evidence="1">Belongs to the endoribonuclease YbeY family.</text>
</comment>
<keyword id="KW-0963">Cytoplasm</keyword>
<keyword id="KW-0255">Endonuclease</keyword>
<keyword id="KW-0378">Hydrolase</keyword>
<keyword id="KW-0479">Metal-binding</keyword>
<keyword id="KW-0540">Nuclease</keyword>
<keyword id="KW-0690">Ribosome biogenesis</keyword>
<keyword id="KW-0698">rRNA processing</keyword>
<keyword id="KW-0862">Zinc</keyword>
<organism>
    <name type="scientific">Rickettsia akari (strain Hartford)</name>
    <dbReference type="NCBI Taxonomy" id="293614"/>
    <lineage>
        <taxon>Bacteria</taxon>
        <taxon>Pseudomonadati</taxon>
        <taxon>Pseudomonadota</taxon>
        <taxon>Alphaproteobacteria</taxon>
        <taxon>Rickettsiales</taxon>
        <taxon>Rickettsiaceae</taxon>
        <taxon>Rickettsieae</taxon>
        <taxon>Rickettsia</taxon>
        <taxon>spotted fever group</taxon>
    </lineage>
</organism>
<evidence type="ECO:0000255" key="1">
    <source>
        <dbReference type="HAMAP-Rule" id="MF_00009"/>
    </source>
</evidence>
<dbReference type="EC" id="3.1.-.-" evidence="1"/>
<dbReference type="EMBL" id="CP000847">
    <property type="protein sequence ID" value="ABV75393.1"/>
    <property type="molecule type" value="Genomic_DNA"/>
</dbReference>
<dbReference type="RefSeq" id="WP_012150022.1">
    <property type="nucleotide sequence ID" value="NC_009881.1"/>
</dbReference>
<dbReference type="SMR" id="A8GPR8"/>
<dbReference type="STRING" id="293614.A1C_05790"/>
<dbReference type="KEGG" id="rak:A1C_05790"/>
<dbReference type="eggNOG" id="COG0319">
    <property type="taxonomic scope" value="Bacteria"/>
</dbReference>
<dbReference type="HOGENOM" id="CLU_106710_0_0_5"/>
<dbReference type="Proteomes" id="UP000006830">
    <property type="component" value="Chromosome"/>
</dbReference>
<dbReference type="GO" id="GO:0005737">
    <property type="term" value="C:cytoplasm"/>
    <property type="evidence" value="ECO:0007669"/>
    <property type="project" value="UniProtKB-SubCell"/>
</dbReference>
<dbReference type="GO" id="GO:0004222">
    <property type="term" value="F:metalloendopeptidase activity"/>
    <property type="evidence" value="ECO:0007669"/>
    <property type="project" value="InterPro"/>
</dbReference>
<dbReference type="GO" id="GO:0004521">
    <property type="term" value="F:RNA endonuclease activity"/>
    <property type="evidence" value="ECO:0007669"/>
    <property type="project" value="UniProtKB-UniRule"/>
</dbReference>
<dbReference type="GO" id="GO:0008270">
    <property type="term" value="F:zinc ion binding"/>
    <property type="evidence" value="ECO:0007669"/>
    <property type="project" value="UniProtKB-UniRule"/>
</dbReference>
<dbReference type="GO" id="GO:0006364">
    <property type="term" value="P:rRNA processing"/>
    <property type="evidence" value="ECO:0007669"/>
    <property type="project" value="UniProtKB-UniRule"/>
</dbReference>
<dbReference type="Gene3D" id="3.40.390.30">
    <property type="entry name" value="Metalloproteases ('zincins'), catalytic domain"/>
    <property type="match status" value="1"/>
</dbReference>
<dbReference type="HAMAP" id="MF_00009">
    <property type="entry name" value="Endoribonucl_YbeY"/>
    <property type="match status" value="1"/>
</dbReference>
<dbReference type="InterPro" id="IPR023091">
    <property type="entry name" value="MetalPrtase_cat_dom_sf_prd"/>
</dbReference>
<dbReference type="InterPro" id="IPR002036">
    <property type="entry name" value="YbeY"/>
</dbReference>
<dbReference type="InterPro" id="IPR020549">
    <property type="entry name" value="YbeY_CS"/>
</dbReference>
<dbReference type="NCBIfam" id="TIGR00043">
    <property type="entry name" value="rRNA maturation RNase YbeY"/>
    <property type="match status" value="1"/>
</dbReference>
<dbReference type="PANTHER" id="PTHR46986">
    <property type="entry name" value="ENDORIBONUCLEASE YBEY, CHLOROPLASTIC"/>
    <property type="match status" value="1"/>
</dbReference>
<dbReference type="PANTHER" id="PTHR46986:SF1">
    <property type="entry name" value="ENDORIBONUCLEASE YBEY, CHLOROPLASTIC"/>
    <property type="match status" value="1"/>
</dbReference>
<dbReference type="Pfam" id="PF02130">
    <property type="entry name" value="YbeY"/>
    <property type="match status" value="1"/>
</dbReference>
<dbReference type="SUPFAM" id="SSF55486">
    <property type="entry name" value="Metalloproteases ('zincins'), catalytic domain"/>
    <property type="match status" value="1"/>
</dbReference>
<dbReference type="PROSITE" id="PS01306">
    <property type="entry name" value="UPF0054"/>
    <property type="match status" value="1"/>
</dbReference>